<gene>
    <name evidence="7" type="primary">darT</name>
    <name evidence="9" type="ordered locus">E2348C_1093</name>
</gene>
<dbReference type="EC" id="2.4.2.-" evidence="4"/>
<dbReference type="EMBL" id="FM180568">
    <property type="protein sequence ID" value="CAS08641.1"/>
    <property type="molecule type" value="Genomic_DNA"/>
</dbReference>
<dbReference type="RefSeq" id="WP_000312835.1">
    <property type="nucleotide sequence ID" value="NC_011601.1"/>
</dbReference>
<dbReference type="SMR" id="B7UP20"/>
<dbReference type="KEGG" id="ecg:E2348C_1093"/>
<dbReference type="HOGENOM" id="CLU_113641_0_0_6"/>
<dbReference type="Proteomes" id="UP000008205">
    <property type="component" value="Chromosome"/>
</dbReference>
<dbReference type="GO" id="GO:0003677">
    <property type="term" value="F:DNA binding"/>
    <property type="evidence" value="ECO:0007669"/>
    <property type="project" value="UniProtKB-KW"/>
</dbReference>
<dbReference type="GO" id="GO:0016757">
    <property type="term" value="F:glycosyltransferase activity"/>
    <property type="evidence" value="ECO:0007669"/>
    <property type="project" value="UniProtKB-KW"/>
</dbReference>
<dbReference type="GO" id="GO:0016779">
    <property type="term" value="F:nucleotidyltransferase activity"/>
    <property type="evidence" value="ECO:0007669"/>
    <property type="project" value="UniProtKB-KW"/>
</dbReference>
<dbReference type="InterPro" id="IPR029494">
    <property type="entry name" value="DarT"/>
</dbReference>
<dbReference type="Pfam" id="PF14487">
    <property type="entry name" value="DarT"/>
    <property type="match status" value="1"/>
</dbReference>
<dbReference type="PROSITE" id="PS52018">
    <property type="entry name" value="DART"/>
    <property type="match status" value="1"/>
</dbReference>
<organism>
    <name type="scientific">Escherichia coli O127:H6 (strain E2348/69 / EPEC)</name>
    <dbReference type="NCBI Taxonomy" id="574521"/>
    <lineage>
        <taxon>Bacteria</taxon>
        <taxon>Pseudomonadati</taxon>
        <taxon>Pseudomonadota</taxon>
        <taxon>Gammaproteobacteria</taxon>
        <taxon>Enterobacterales</taxon>
        <taxon>Enterobacteriaceae</taxon>
        <taxon>Escherichia</taxon>
    </lineage>
</organism>
<accession>B7UP20</accession>
<name>DART_ECO27</name>
<protein>
    <recommendedName>
        <fullName evidence="7">DNA ADP-ribosyl transferase</fullName>
        <shortName evidence="7">DarT</shortName>
        <ecNumber evidence="4">2.4.2.-</ecNumber>
    </recommendedName>
    <alternativeName>
        <fullName evidence="7">Toxin DarT</fullName>
    </alternativeName>
</protein>
<reference evidence="9" key="1">
    <citation type="journal article" date="2009" name="J. Bacteriol.">
        <title>Complete genome sequence and comparative genome analysis of enteropathogenic Escherichia coli O127:H6 strain E2348/69.</title>
        <authorList>
            <person name="Iguchi A."/>
            <person name="Thomson N.R."/>
            <person name="Ogura Y."/>
            <person name="Saunders D."/>
            <person name="Ooka T."/>
            <person name="Henderson I.R."/>
            <person name="Harris D."/>
            <person name="Asadulghani M."/>
            <person name="Kurokawa K."/>
            <person name="Dean P."/>
            <person name="Kenny B."/>
            <person name="Quail M.A."/>
            <person name="Thurston S."/>
            <person name="Dougan G."/>
            <person name="Hayashi T."/>
            <person name="Parkhill J."/>
            <person name="Frankel G."/>
        </authorList>
    </citation>
    <scope>NUCLEOTIDE SEQUENCE [LARGE SCALE GENOMIC DNA]</scope>
    <source>
        <strain>E2348/69 / EPEC</strain>
    </source>
</reference>
<reference key="2">
    <citation type="journal article" date="2020" name="Cell Rep.">
        <title>DNA ADP-Ribosylation Stalls Replication and Is Reversed by RecF-Mediated Homologous Recombination and Nucleotide Excision Repair.</title>
        <authorList>
            <person name="Lawaree E."/>
            <person name="Jankevicius G."/>
            <person name="Cooper C."/>
            <person name="Ahel I."/>
            <person name="Uphoff S."/>
            <person name="Tang C.M."/>
        </authorList>
    </citation>
    <scope>FUNCTION AS A TOXIN</scope>
    <scope>FUNCTION AS AN ADP-RIBOSYL TRANSFERASE</scope>
    <scope>SUBUNIT</scope>
    <scope>MUTAGENESIS OF GLY-49 AND GLU-170</scope>
    <source>
        <strain>E2348/69 / EPEC</strain>
    </source>
</reference>
<reference key="3">
    <citation type="journal article" date="2021" name="Nature">
        <title>Molecular basis for DarT ADP-ribosylation of a DNA base.</title>
        <authorList>
            <person name="Schuller M."/>
            <person name="Butler R.E."/>
            <person name="Ariza A."/>
            <person name="Tromans-Coia C."/>
            <person name="Jankevicius G."/>
            <person name="Claridge T.D.W."/>
            <person name="Kendall S.L."/>
            <person name="Goh S."/>
            <person name="Stewart G.R."/>
            <person name="Ahel I."/>
        </authorList>
    </citation>
    <scope>FUNCTION AS A TOXIN</scope>
    <scope>FUNCTION AS AN ADP-RIBOSYL TRANSFERASE</scope>
    <scope>MUTAGENESIS OF GLY-49 AND GLU-170</scope>
    <source>
        <strain>E2348/69 / EPEC</strain>
    </source>
</reference>
<reference key="4">
    <citation type="journal article" date="2022" name="Nat. Microbiol.">
        <title>The DarTG toxin-antitoxin system provides phage defence by ADP-ribosylating viral DNA.</title>
        <authorList>
            <person name="LeRoux M."/>
            <person name="Srikant S."/>
            <person name="Teodoro G.I.C."/>
            <person name="Zhang T."/>
            <person name="Littlehale M.L."/>
            <person name="Doron S."/>
            <person name="Badiee M."/>
            <person name="Leung A.K.L."/>
            <person name="Sorek R."/>
            <person name="Laub M.T."/>
        </authorList>
    </citation>
    <scope>FUNCTION</scope>
</reference>
<comment type="function">
    <text evidence="2 4 5 6 8">Toxic component of the hybrid type II/IV toxin-antitoxin (TA) system DarTG, which plays a crucial role in controlling bacterial growth and bacteriophage infection (By similarity). ADP-ribosylates ssDNA in the sequence TTT/TCT. In case of phage infection, DarT toxin ADP-ribosylates DNA, which inhibits both viral DNA and RNA synthesis and leads to abortive infection (PubMed:35725776). Its toxic effect is neutralized by cognate antitoxin DarG (PubMed:32023456). May target ssDNA loops during DNA replication, probably modifies thymidine (Probable). Wild-type protein cannot be expressed at low levels in the absence of its cognate antitoxin, but a mutant protein (G49D) can be expressed, which slows growth, rapidly inhibits DNA replication, and induces RecA expression and the SOS response (PubMed:32023456). The slow growth phenotype can be suppressed by cognate antitoxin DarG. Has no activity on dsDNA in vitro (PubMed:32023456). In vivo ADP-ribosylates genomic DNA (gDNA) (PubMed:34408320). Genetic data strongly suggests ADP-ribosylation by DarT probably generates ssDNA gaps that are repaired by the RecFOR-mediated homologous recombination pathway (RuvAB, RecG) and resolved by RuvC. In some cases these gaps probably migrate into dsDNA, where they are resolved by nucleotide excision repair (NER) detected by UvrAB, excised by UvrC, removed by UvrD, and repaired by Pol I and ligase. Other pathways may also be involved in ADP-ribosylation removal from DNA (Probable).</text>
</comment>
<comment type="catalytic activity">
    <reaction evidence="3">
        <text>a thymidine in DNA + NAD(+) = an N-(ADP-alpha-D-ribosyl)-thymidine in DNA + nicotinamide + H(+)</text>
        <dbReference type="Rhea" id="RHEA:71651"/>
        <dbReference type="Rhea" id="RHEA-COMP:13556"/>
        <dbReference type="Rhea" id="RHEA-COMP:18051"/>
        <dbReference type="ChEBI" id="CHEBI:15378"/>
        <dbReference type="ChEBI" id="CHEBI:17154"/>
        <dbReference type="ChEBI" id="CHEBI:57540"/>
        <dbReference type="ChEBI" id="CHEBI:137386"/>
        <dbReference type="ChEBI" id="CHEBI:191199"/>
    </reaction>
    <physiologicalReaction direction="left-to-right" evidence="3 4 5">
        <dbReference type="Rhea" id="RHEA:71652"/>
    </physiologicalReaction>
</comment>
<comment type="subunit">
    <text evidence="8">Interacts with cognate antitoxin DarG (via C-terminus); this heterodimeric complex neutralizes the toxic effect of DarT by preventing ssDNA binding to DarT and consequently inactivating the toxin by direct protein-protein interactions.</text>
</comment>
<comment type="domain">
    <text evidence="1">The NAD(+)-binding element stabilizes the ADP-ribosylating turn-turn (ARTT) loop which confers substrate specificity; both domains contribute to ssDNA-binding.</text>
</comment>
<comment type="similarity">
    <text evidence="3">Belongs to the DarT ADP-ribosyltransferase family.</text>
</comment>
<feature type="chain" id="PRO_0000456048" description="DNA ADP-ribosyl transferase">
    <location>
        <begin position="1"/>
        <end position="218"/>
    </location>
</feature>
<feature type="domain" description="DarT" evidence="3">
    <location>
        <begin position="14"/>
        <end position="217"/>
    </location>
</feature>
<feature type="region of interest" description="NAD(+)-binding element" evidence="1">
    <location>
        <begin position="41"/>
        <end position="59"/>
    </location>
</feature>
<feature type="region of interest" description="ADP-ribosylating turn-turn loop" evidence="1">
    <location>
        <begin position="123"/>
        <end position="170"/>
    </location>
</feature>
<feature type="active site" description="Proton acceptor" evidence="3">
    <location>
        <position position="57"/>
    </location>
</feature>
<feature type="active site" evidence="3">
    <location>
        <position position="170"/>
    </location>
</feature>
<feature type="binding site" evidence="3">
    <location>
        <begin position="18"/>
        <end position="20"/>
    </location>
    <ligand>
        <name>NAD(+)</name>
        <dbReference type="ChEBI" id="CHEBI:57540"/>
    </ligand>
</feature>
<feature type="binding site" evidence="3">
    <location>
        <position position="57"/>
    </location>
    <ligand>
        <name>NAD(+)</name>
        <dbReference type="ChEBI" id="CHEBI:57540"/>
    </ligand>
</feature>
<feature type="mutagenesis site" description="Decreased levels of ssDNA ADP-ribosylation, decreased viability of E.coli without endogenous darTG operon, impedes DNA replication, induces RecA expression. Still ADP-ribosylates gDNA in vivo." evidence="4 5">
    <original>G</original>
    <variation>D</variation>
    <location>
        <position position="49"/>
    </location>
</feature>
<feature type="mutagenesis site" description="Nearly complete loss of ssDNA ADP-ribosylation, not toxic in situ, no effect on DNA replication, no RecA induction. No ADP-ribosylation of gDNA in vivo." evidence="4 5">
    <original>E</original>
    <variation>A</variation>
    <location>
        <position position="170"/>
    </location>
</feature>
<sequence length="218" mass="25277">MAYDYSASLNPQKALIWRIVHRDNIPWILDNGLHCGNSLVQAENWINIGNPELIGKRAGHPVPVGTGGTLHDYVPFYFTPFSPMLMNIHSGRGGIKRRPNEEIVILVSNLRNVAAHDVPFVFTDSHAYYNWTNYYTSLNSLDQIDWPILQARDFRRDPDDPAKFERYQAEALIWQHCPISLLDGIICYSEEVRLQLEQWLFQRNLTMSVHTRSGWYFS</sequence>
<keyword id="KW-0238">DNA-binding</keyword>
<keyword id="KW-0328">Glycosyltransferase</keyword>
<keyword id="KW-0548">Nucleotidyltransferase</keyword>
<keyword id="KW-1185">Reference proteome</keyword>
<keyword id="KW-1277">Toxin-antitoxin system</keyword>
<keyword id="KW-0808">Transferase</keyword>
<proteinExistence type="evidence at protein level"/>
<evidence type="ECO:0000250" key="1">
    <source>
        <dbReference type="UniProtKB" id="A0A0B0SG80"/>
    </source>
</evidence>
<evidence type="ECO:0000250" key="2">
    <source>
        <dbReference type="UniProtKB" id="O53604"/>
    </source>
</evidence>
<evidence type="ECO:0000255" key="3">
    <source>
        <dbReference type="PROSITE-ProRule" id="PRU01362"/>
    </source>
</evidence>
<evidence type="ECO:0000269" key="4">
    <source>
    </source>
</evidence>
<evidence type="ECO:0000269" key="5">
    <source>
    </source>
</evidence>
<evidence type="ECO:0000269" key="6">
    <source>
    </source>
</evidence>
<evidence type="ECO:0000303" key="7">
    <source>
    </source>
</evidence>
<evidence type="ECO:0000305" key="8">
    <source>
    </source>
</evidence>
<evidence type="ECO:0000312" key="9">
    <source>
        <dbReference type="EMBL" id="CAS08641.1"/>
    </source>
</evidence>